<reference key="1">
    <citation type="submission" date="1995-03" db="EMBL/GenBank/DDBJ databases">
        <title>cDNA cloning of guinea pig adrenal CYP17.</title>
        <authorList>
            <person name="Huang Y."/>
            <person name="Voigt J.M."/>
            <person name="Colby H.D."/>
        </authorList>
    </citation>
    <scope>NUCLEOTIDE SEQUENCE</scope>
    <source>
        <strain>English short hair</strain>
        <tissue>Adrenal cortex</tissue>
    </source>
</reference>
<reference key="2">
    <citation type="journal article" date="1994" name="DNA Cell Biol.">
        <title>Molecular cloning and expression of guinea pig cytochrome P450c17 cDNA (steroid 17 alpha-hydroxylase/17,20 lyase): tissue distribution, regulation, and substrate specificity of the expressed enzyme.</title>
        <authorList>
            <person name="Tremblay Y."/>
            <person name="Fleury A."/>
            <person name="Beaudoin C."/>
            <person name="Vallee M."/>
            <person name="Belanger A."/>
        </authorList>
    </citation>
    <scope>NUCLEOTIDE SEQUENCE [MRNA]</scope>
    <source>
        <tissue>Adrenal gland</tissue>
    </source>
</reference>
<reference key="3">
    <citation type="journal article" date="1983" name="J. Biochem.">
        <title>Partial amino acid sequences of two mitochondrial and two microsomal cytochrome P-450's from adrenal cortex.</title>
        <authorList>
            <person name="Ogishima T."/>
            <person name="Okada Y."/>
            <person name="Kominami S."/>
            <person name="Takemori S."/>
            <person name="Omura T."/>
        </authorList>
    </citation>
    <scope>PROTEIN SEQUENCE OF 1-15</scope>
</reference>
<organism>
    <name type="scientific">Cavia porcellus</name>
    <name type="common">Guinea pig</name>
    <dbReference type="NCBI Taxonomy" id="10141"/>
    <lineage>
        <taxon>Eukaryota</taxon>
        <taxon>Metazoa</taxon>
        <taxon>Chordata</taxon>
        <taxon>Craniata</taxon>
        <taxon>Vertebrata</taxon>
        <taxon>Euteleostomi</taxon>
        <taxon>Mammalia</taxon>
        <taxon>Eutheria</taxon>
        <taxon>Euarchontoglires</taxon>
        <taxon>Glires</taxon>
        <taxon>Rodentia</taxon>
        <taxon>Hystricomorpha</taxon>
        <taxon>Caviidae</taxon>
        <taxon>Cavia</taxon>
    </lineage>
</organism>
<sequence>MWELVTLLGLILAYLFWPRQGSSGTKYPKSLPSLPVVGSLPFLPKSGHMHVNFFKLQKKYGPIYSFRLGSTTTVVIGHHQLARELLIKKGKEFSGRPLTTTVALLSDNGKGIAFADSSATWQLHRRLVLSSFSLFRDGEQKLENIICQELSALCDFLATCDGQVKDLSSSIFMTVVNIICMICFSVSYKEGDMELVTIRRFTTGFVNSLSDDNLVDIFPWLKIFPNKTLEMIRKYTEIRGAMLSKILKECKEKFRSDSVSNLIDLLIQAKVNENNNNSSLDQDSNLFSDKHILTTLGDIFGAGVETSSSVVLWVIAFLLHNPQVKKKIQEEIDHNVGFSRTPTFSDRNHLLMLEATIREVLRIRPVAPILIPHKANTDSSIGEFAIDKDTNVLVNLWALHHNEQEWDRPDQFMPERFLDPTGSQIIVPSSSYLPFGAGPRSCVGEALARQEIFLITAWLLQKFDLEVPEGGQLPSLEGIPKIVFLIDPFKVKITVRPAWKEAQAEGSA</sequence>
<protein>
    <recommendedName>
        <fullName>Steroid 17-alpha-hydroxylase/17,20 lyase</fullName>
        <ecNumber evidence="2">1.14.14.19</ecNumber>
    </recommendedName>
    <alternativeName>
        <fullName>17-alpha-hydroxyprogesterone aldolase</fullName>
        <ecNumber evidence="2">1.14.14.32</ecNumber>
    </alternativeName>
    <alternativeName>
        <fullName>CYPXVII</fullName>
    </alternativeName>
    <alternativeName>
        <fullName>Cytochrome P450 17A1</fullName>
    </alternativeName>
    <alternativeName>
        <fullName>Cytochrome P450-C17</fullName>
        <shortName>Cytochrome P450c17</shortName>
    </alternativeName>
    <alternativeName>
        <fullName>Steroid 17-alpha-monooxygenase</fullName>
    </alternativeName>
</protein>
<keyword id="KW-0903">Direct protein sequencing</keyword>
<keyword id="KW-0256">Endoplasmic reticulum</keyword>
<keyword id="KW-0349">Heme</keyword>
<keyword id="KW-0408">Iron</keyword>
<keyword id="KW-0443">Lipid metabolism</keyword>
<keyword id="KW-0456">Lyase</keyword>
<keyword id="KW-0472">Membrane</keyword>
<keyword id="KW-0479">Metal-binding</keyword>
<keyword id="KW-0492">Microsome</keyword>
<keyword id="KW-0503">Monooxygenase</keyword>
<keyword id="KW-0560">Oxidoreductase</keyword>
<keyword id="KW-1185">Reference proteome</keyword>
<keyword id="KW-0755">Steroidogenesis</keyword>
<gene>
    <name type="primary">CYP17A1</name>
    <name type="synonym">CYP17</name>
</gene>
<proteinExistence type="evidence at protein level"/>
<feature type="chain" id="PRO_0000051928" description="Steroid 17-alpha-hydroxylase/17,20 lyase">
    <location>
        <begin position="1"/>
        <end position="508"/>
    </location>
</feature>
<feature type="binding site" description="axial binding residue" evidence="1">
    <location>
        <position position="442"/>
    </location>
    <ligand>
        <name>heme</name>
        <dbReference type="ChEBI" id="CHEBI:30413"/>
    </ligand>
    <ligandPart>
        <name>Fe</name>
        <dbReference type="ChEBI" id="CHEBI:18248"/>
    </ligandPart>
</feature>
<feature type="sequence conflict" description="In Ref. 2; AAB33048." evidence="3" ref="2">
    <original>P</original>
    <variation>S</variation>
    <location>
        <position position="62"/>
    </location>
</feature>
<accession>Q64410</accession>
<accession>Q64659</accession>
<dbReference type="EC" id="1.14.14.19" evidence="2"/>
<dbReference type="EC" id="1.14.14.32" evidence="2"/>
<dbReference type="EMBL" id="X82878">
    <property type="protein sequence ID" value="CAA58059.1"/>
    <property type="molecule type" value="Genomic_DNA"/>
</dbReference>
<dbReference type="EMBL" id="S75277">
    <property type="protein sequence ID" value="AAB33048.1"/>
    <property type="molecule type" value="mRNA"/>
</dbReference>
<dbReference type="PIR" id="I53018">
    <property type="entry name" value="I53018"/>
</dbReference>
<dbReference type="PIR" id="S52756">
    <property type="entry name" value="S52756"/>
</dbReference>
<dbReference type="SMR" id="Q64410"/>
<dbReference type="FunCoup" id="Q64410">
    <property type="interactions" value="220"/>
</dbReference>
<dbReference type="STRING" id="10141.ENSCPOP00000013107"/>
<dbReference type="GeneID" id="100729670"/>
<dbReference type="KEGG" id="cpoc:100729670"/>
<dbReference type="eggNOG" id="KOG0156">
    <property type="taxonomic scope" value="Eukaryota"/>
</dbReference>
<dbReference type="HOGENOM" id="CLU_001570_22_0_1"/>
<dbReference type="InParanoid" id="Q64410"/>
<dbReference type="OrthoDB" id="1470350at2759"/>
<dbReference type="TreeFam" id="TF105095"/>
<dbReference type="BRENDA" id="1.14.14.19">
    <property type="organism ID" value="1225"/>
</dbReference>
<dbReference type="BRENDA" id="1.14.14.32">
    <property type="organism ID" value="1225"/>
</dbReference>
<dbReference type="UniPathway" id="UPA00788"/>
<dbReference type="Proteomes" id="UP000005447">
    <property type="component" value="Unassembled WGS sequence"/>
</dbReference>
<dbReference type="GO" id="GO:0005789">
    <property type="term" value="C:endoplasmic reticulum membrane"/>
    <property type="evidence" value="ECO:0007669"/>
    <property type="project" value="UniProtKB-SubCell"/>
</dbReference>
<dbReference type="GO" id="GO:0020037">
    <property type="term" value="F:heme binding"/>
    <property type="evidence" value="ECO:0000250"/>
    <property type="project" value="UniProtKB"/>
</dbReference>
<dbReference type="GO" id="GO:0005506">
    <property type="term" value="F:iron ion binding"/>
    <property type="evidence" value="ECO:0007669"/>
    <property type="project" value="InterPro"/>
</dbReference>
<dbReference type="GO" id="GO:0016829">
    <property type="term" value="F:lyase activity"/>
    <property type="evidence" value="ECO:0007669"/>
    <property type="project" value="UniProtKB-KW"/>
</dbReference>
<dbReference type="GO" id="GO:0004508">
    <property type="term" value="F:steroid 17-alpha-monooxygenase activity"/>
    <property type="evidence" value="ECO:0000250"/>
    <property type="project" value="UniProtKB"/>
</dbReference>
<dbReference type="GO" id="GO:0006704">
    <property type="term" value="P:glucocorticoid biosynthetic process"/>
    <property type="evidence" value="ECO:0007669"/>
    <property type="project" value="UniProtKB-UniPathway"/>
</dbReference>
<dbReference type="GO" id="GO:0042446">
    <property type="term" value="P:hormone biosynthetic process"/>
    <property type="evidence" value="ECO:0000250"/>
    <property type="project" value="UniProtKB"/>
</dbReference>
<dbReference type="GO" id="GO:0042448">
    <property type="term" value="P:progesterone metabolic process"/>
    <property type="evidence" value="ECO:0000250"/>
    <property type="project" value="UniProtKB"/>
</dbReference>
<dbReference type="GO" id="GO:0008202">
    <property type="term" value="P:steroid metabolic process"/>
    <property type="evidence" value="ECO:0000250"/>
    <property type="project" value="UniProtKB"/>
</dbReference>
<dbReference type="CDD" id="cd20673">
    <property type="entry name" value="CYP17A1"/>
    <property type="match status" value="1"/>
</dbReference>
<dbReference type="FunFam" id="1.10.630.10:FF:000002">
    <property type="entry name" value="Cytochrome P450 1A1"/>
    <property type="match status" value="1"/>
</dbReference>
<dbReference type="Gene3D" id="1.10.630.10">
    <property type="entry name" value="Cytochrome P450"/>
    <property type="match status" value="1"/>
</dbReference>
<dbReference type="InterPro" id="IPR001128">
    <property type="entry name" value="Cyt_P450"/>
</dbReference>
<dbReference type="InterPro" id="IPR017972">
    <property type="entry name" value="Cyt_P450_CS"/>
</dbReference>
<dbReference type="InterPro" id="IPR002401">
    <property type="entry name" value="Cyt_P450_E_grp-I"/>
</dbReference>
<dbReference type="InterPro" id="IPR036396">
    <property type="entry name" value="Cyt_P450_sf"/>
</dbReference>
<dbReference type="PANTHER" id="PTHR24289">
    <property type="entry name" value="STEROID 17-ALPHA-HYDROXYLASE/17,20 LYASE"/>
    <property type="match status" value="1"/>
</dbReference>
<dbReference type="PANTHER" id="PTHR24289:SF13">
    <property type="entry name" value="STEROID 17-ALPHA-HYDROXYLASE_17,20 LYASE"/>
    <property type="match status" value="1"/>
</dbReference>
<dbReference type="Pfam" id="PF00067">
    <property type="entry name" value="p450"/>
    <property type="match status" value="1"/>
</dbReference>
<dbReference type="PRINTS" id="PR00463">
    <property type="entry name" value="EP450I"/>
</dbReference>
<dbReference type="PRINTS" id="PR00385">
    <property type="entry name" value="P450"/>
</dbReference>
<dbReference type="SUPFAM" id="SSF48264">
    <property type="entry name" value="Cytochrome P450"/>
    <property type="match status" value="1"/>
</dbReference>
<dbReference type="PROSITE" id="PS00086">
    <property type="entry name" value="CYTOCHROME_P450"/>
    <property type="match status" value="1"/>
</dbReference>
<name>CP17A_CAVPO</name>
<evidence type="ECO:0000250" key="1"/>
<evidence type="ECO:0000250" key="2">
    <source>
        <dbReference type="UniProtKB" id="P05093"/>
    </source>
</evidence>
<evidence type="ECO:0000305" key="3"/>
<comment type="function">
    <text evidence="2">A cytochrome P450 monooxygenase involved in corticoid and androgen biosynthesis. Catalyzes 17-alpha hydroxylation of C21 steroids, which is common for both pathways. A second oxidative step, required only for androgen synthesis, involves an acyl-carbon cleavage. The 17-alpha hydroxy intermediates, as part of adrenal glucocorticoids biosynthesis pathway, are precursors of cortisol. Hydroxylates steroid hormones, pregnenolone and progesterone to form 17-alpha hydroxy metabolites, followed by the cleavage of the C17-C20 bond to form C19 steroids, dehydroepiandrosterone (DHEA) and androstenedione. Has 16-alpha hydroxylase activity. Catalyzes 16-alpha hydroxylation of 17-alpha hydroxy pregnenolone, followed by the cleavage of the C17-C20 bond to form 16-alpha-hydroxy DHEA. Also 16-alpha hydroxylates androgens, relevant for estriol synthesis. Mechanistically, uses molecular oxygen inserting one oxygen atom into a substrate, and reducing the second into a water molecule, with two electrons provided by NADPH via cytochrome P450 reductase (CPR; NADPH-ferrihemoprotein reductase).</text>
</comment>
<comment type="catalytic activity">
    <reaction evidence="2">
        <text>a C21-steroid + reduced [NADPH--hemoprotein reductase] + O2 = a 17alpha-hydroxy-C21-steroid + oxidized [NADPH--hemoprotein reductase] + H2O + H(+)</text>
        <dbReference type="Rhea" id="RHEA:65760"/>
        <dbReference type="Rhea" id="RHEA-COMP:11964"/>
        <dbReference type="Rhea" id="RHEA-COMP:11965"/>
        <dbReference type="ChEBI" id="CHEBI:15377"/>
        <dbReference type="ChEBI" id="CHEBI:15378"/>
        <dbReference type="ChEBI" id="CHEBI:15379"/>
        <dbReference type="ChEBI" id="CHEBI:57618"/>
        <dbReference type="ChEBI" id="CHEBI:58210"/>
        <dbReference type="ChEBI" id="CHEBI:61313"/>
        <dbReference type="ChEBI" id="CHEBI:138141"/>
        <dbReference type="EC" id="1.14.14.19"/>
    </reaction>
    <physiologicalReaction direction="left-to-right" evidence="2">
        <dbReference type="Rhea" id="RHEA:65761"/>
    </physiologicalReaction>
</comment>
<comment type="catalytic activity">
    <reaction evidence="2">
        <text>progesterone + reduced [NADPH--hemoprotein reductase] + O2 = 17alpha-hydroxyprogesterone + oxidized [NADPH--hemoprotein reductase] + H2O + H(+)</text>
        <dbReference type="Rhea" id="RHEA:46308"/>
        <dbReference type="Rhea" id="RHEA-COMP:11964"/>
        <dbReference type="Rhea" id="RHEA-COMP:11965"/>
        <dbReference type="ChEBI" id="CHEBI:15377"/>
        <dbReference type="ChEBI" id="CHEBI:15378"/>
        <dbReference type="ChEBI" id="CHEBI:15379"/>
        <dbReference type="ChEBI" id="CHEBI:17026"/>
        <dbReference type="ChEBI" id="CHEBI:17252"/>
        <dbReference type="ChEBI" id="CHEBI:57618"/>
        <dbReference type="ChEBI" id="CHEBI:58210"/>
        <dbReference type="EC" id="1.14.14.19"/>
    </reaction>
    <physiologicalReaction direction="left-to-right" evidence="2">
        <dbReference type="Rhea" id="RHEA:46309"/>
    </physiologicalReaction>
</comment>
<comment type="catalytic activity">
    <reaction evidence="2">
        <text>pregnenolone + reduced [NADPH--hemoprotein reductase] + O2 = 17alpha-hydroxypregnenolone + oxidized [NADPH--hemoprotein reductase] + H2O + H(+)</text>
        <dbReference type="Rhea" id="RHEA:50236"/>
        <dbReference type="Rhea" id="RHEA-COMP:11964"/>
        <dbReference type="Rhea" id="RHEA-COMP:11965"/>
        <dbReference type="ChEBI" id="CHEBI:15377"/>
        <dbReference type="ChEBI" id="CHEBI:15378"/>
        <dbReference type="ChEBI" id="CHEBI:15379"/>
        <dbReference type="ChEBI" id="CHEBI:16581"/>
        <dbReference type="ChEBI" id="CHEBI:28750"/>
        <dbReference type="ChEBI" id="CHEBI:57618"/>
        <dbReference type="ChEBI" id="CHEBI:58210"/>
        <dbReference type="EC" id="1.14.14.19"/>
    </reaction>
    <physiologicalReaction direction="left-to-right" evidence="2">
        <dbReference type="Rhea" id="RHEA:50237"/>
    </physiologicalReaction>
</comment>
<comment type="catalytic activity">
    <reaction evidence="2">
        <text>17alpha-hydroxyprogesterone + reduced [NADPH--hemoprotein reductase] + O2 = androst-4-ene-3,17-dione + acetate + oxidized [NADPH--hemoprotein reductase] + H2O + 2 H(+)</text>
        <dbReference type="Rhea" id="RHEA:14753"/>
        <dbReference type="Rhea" id="RHEA-COMP:11964"/>
        <dbReference type="Rhea" id="RHEA-COMP:11965"/>
        <dbReference type="ChEBI" id="CHEBI:15377"/>
        <dbReference type="ChEBI" id="CHEBI:15378"/>
        <dbReference type="ChEBI" id="CHEBI:15379"/>
        <dbReference type="ChEBI" id="CHEBI:16422"/>
        <dbReference type="ChEBI" id="CHEBI:17252"/>
        <dbReference type="ChEBI" id="CHEBI:30089"/>
        <dbReference type="ChEBI" id="CHEBI:57618"/>
        <dbReference type="ChEBI" id="CHEBI:58210"/>
        <dbReference type="EC" id="1.14.14.32"/>
    </reaction>
    <physiologicalReaction direction="left-to-right" evidence="2">
        <dbReference type="Rhea" id="RHEA:14754"/>
    </physiologicalReaction>
</comment>
<comment type="catalytic activity">
    <reaction evidence="2">
        <text>17alpha-hydroxyprogesterone + reduced [NADPH--hemoprotein reductase] + O2 = 16alpha,17alpha-dihydroxyprogesterone + oxidized [NADPH--hemoprotein reductase] + H2O + H(+)</text>
        <dbReference type="Rhea" id="RHEA:53216"/>
        <dbReference type="Rhea" id="RHEA-COMP:11964"/>
        <dbReference type="Rhea" id="RHEA-COMP:11965"/>
        <dbReference type="ChEBI" id="CHEBI:763"/>
        <dbReference type="ChEBI" id="CHEBI:15377"/>
        <dbReference type="ChEBI" id="CHEBI:15378"/>
        <dbReference type="ChEBI" id="CHEBI:15379"/>
        <dbReference type="ChEBI" id="CHEBI:17252"/>
        <dbReference type="ChEBI" id="CHEBI:57618"/>
        <dbReference type="ChEBI" id="CHEBI:58210"/>
    </reaction>
    <physiologicalReaction direction="left-to-right" evidence="2">
        <dbReference type="Rhea" id="RHEA:53217"/>
    </physiologicalReaction>
</comment>
<comment type="catalytic activity">
    <reaction evidence="2">
        <text>16alpha,17alpha-dihydroxyprogesterone + reduced [NADPH--hemoprotein reductase] + O2 = 6beta,16alpha,17alpha-trihydroxyprogesterone + oxidized [NADPH--hemoprotein reductase] + H2O + H(+)</text>
        <dbReference type="Rhea" id="RHEA:53220"/>
        <dbReference type="Rhea" id="RHEA-COMP:11964"/>
        <dbReference type="Rhea" id="RHEA-COMP:11965"/>
        <dbReference type="ChEBI" id="CHEBI:763"/>
        <dbReference type="ChEBI" id="CHEBI:15377"/>
        <dbReference type="ChEBI" id="CHEBI:15378"/>
        <dbReference type="ChEBI" id="CHEBI:15379"/>
        <dbReference type="ChEBI" id="CHEBI:57618"/>
        <dbReference type="ChEBI" id="CHEBI:58210"/>
        <dbReference type="ChEBI" id="CHEBI:137046"/>
    </reaction>
    <physiologicalReaction direction="left-to-right" evidence="2">
        <dbReference type="Rhea" id="RHEA:53221"/>
    </physiologicalReaction>
</comment>
<comment type="catalytic activity">
    <reaction evidence="2">
        <text>17alpha-hydroxypregnenolone + reduced [NADPH--hemoprotein reductase] + O2 = 3beta-hydroxyandrost-5-en-17-one + acetate + oxidized [NADPH--hemoprotein reductase] + H2O + 2 H(+)</text>
        <dbReference type="Rhea" id="RHEA:50244"/>
        <dbReference type="Rhea" id="RHEA-COMP:11964"/>
        <dbReference type="Rhea" id="RHEA-COMP:11965"/>
        <dbReference type="ChEBI" id="CHEBI:15377"/>
        <dbReference type="ChEBI" id="CHEBI:15378"/>
        <dbReference type="ChEBI" id="CHEBI:15379"/>
        <dbReference type="ChEBI" id="CHEBI:28689"/>
        <dbReference type="ChEBI" id="CHEBI:28750"/>
        <dbReference type="ChEBI" id="CHEBI:30089"/>
        <dbReference type="ChEBI" id="CHEBI:57618"/>
        <dbReference type="ChEBI" id="CHEBI:58210"/>
        <dbReference type="EC" id="1.14.14.32"/>
    </reaction>
    <physiologicalReaction direction="left-to-right" evidence="2">
        <dbReference type="Rhea" id="RHEA:50245"/>
    </physiologicalReaction>
</comment>
<comment type="catalytic activity">
    <reaction evidence="2">
        <text>16alpha,17alpha-dihydroxypregnenolone + reduced [NADPH--hemoprotein reductase] + O2 = 3beta,16alpha-dihydroxy-androst-5-en-17-one + acetate + oxidized [NADPH--hemoprotein reductase] + H2O + 2 H(+)</text>
        <dbReference type="Rhea" id="RHEA:53224"/>
        <dbReference type="Rhea" id="RHEA-COMP:11964"/>
        <dbReference type="Rhea" id="RHEA-COMP:11965"/>
        <dbReference type="ChEBI" id="CHEBI:15377"/>
        <dbReference type="ChEBI" id="CHEBI:15378"/>
        <dbReference type="ChEBI" id="CHEBI:15379"/>
        <dbReference type="ChEBI" id="CHEBI:27771"/>
        <dbReference type="ChEBI" id="CHEBI:30089"/>
        <dbReference type="ChEBI" id="CHEBI:57618"/>
        <dbReference type="ChEBI" id="CHEBI:58210"/>
        <dbReference type="ChEBI" id="CHEBI:137049"/>
    </reaction>
    <physiologicalReaction direction="left-to-right" evidence="2">
        <dbReference type="Rhea" id="RHEA:53225"/>
    </physiologicalReaction>
</comment>
<comment type="catalytic activity">
    <reaction evidence="2">
        <text>3beta-hydroxyandrost-5-en-17-one + reduced [NADPH--hemoprotein reductase] + O2 = 3beta,16alpha-dihydroxy-androst-5-en-17-one + oxidized [NADPH--hemoprotein reductase] + H2O + H(+)</text>
        <dbReference type="Rhea" id="RHEA:47220"/>
        <dbReference type="Rhea" id="RHEA-COMP:11964"/>
        <dbReference type="Rhea" id="RHEA-COMP:11965"/>
        <dbReference type="ChEBI" id="CHEBI:15377"/>
        <dbReference type="ChEBI" id="CHEBI:15378"/>
        <dbReference type="ChEBI" id="CHEBI:15379"/>
        <dbReference type="ChEBI" id="CHEBI:27771"/>
        <dbReference type="ChEBI" id="CHEBI:28689"/>
        <dbReference type="ChEBI" id="CHEBI:57618"/>
        <dbReference type="ChEBI" id="CHEBI:58210"/>
    </reaction>
    <physiologicalReaction direction="left-to-right" evidence="2">
        <dbReference type="Rhea" id="RHEA:47221"/>
    </physiologicalReaction>
</comment>
<comment type="catalytic activity">
    <reaction evidence="2">
        <text>androst-4-ene-3,17-dione + reduced [NADPH--hemoprotein reductase] + O2 = 16alpha-hydroxyandrost-4-ene-3,17-dione + oxidized [NADPH--hemoprotein reductase] + H2O + H(+)</text>
        <dbReference type="Rhea" id="RHEA:53228"/>
        <dbReference type="Rhea" id="RHEA-COMP:11964"/>
        <dbReference type="Rhea" id="RHEA-COMP:11965"/>
        <dbReference type="ChEBI" id="CHEBI:15377"/>
        <dbReference type="ChEBI" id="CHEBI:15378"/>
        <dbReference type="ChEBI" id="CHEBI:15379"/>
        <dbReference type="ChEBI" id="CHEBI:16422"/>
        <dbReference type="ChEBI" id="CHEBI:27582"/>
        <dbReference type="ChEBI" id="CHEBI:57618"/>
        <dbReference type="ChEBI" id="CHEBI:58210"/>
    </reaction>
    <physiologicalReaction direction="left-to-right" evidence="2">
        <dbReference type="Rhea" id="RHEA:53229"/>
    </physiologicalReaction>
</comment>
<comment type="cofactor">
    <cofactor evidence="2">
        <name>heme</name>
        <dbReference type="ChEBI" id="CHEBI:30413"/>
    </cofactor>
</comment>
<comment type="activity regulation">
    <text evidence="2">Regulated predominantly by intracellular cAMP levels. The 17,20-lyase activity is stimulated by cytochrome b5, which acts as an allosteric effector increasing the Vmax of the lyase activity.</text>
</comment>
<comment type="pathway">
    <text evidence="2">Steroid hormone biosynthesis.</text>
</comment>
<comment type="pathway">
    <text evidence="2">Steroid biosynthesis; glucocorticoid biosynthesis.</text>
</comment>
<comment type="subcellular location">
    <subcellularLocation>
        <location evidence="2">Endoplasmic reticulum membrane</location>
    </subcellularLocation>
    <subcellularLocation>
        <location evidence="2">Microsome membrane</location>
    </subcellularLocation>
</comment>
<comment type="similarity">
    <text evidence="3">Belongs to the cytochrome P450 family.</text>
</comment>